<evidence type="ECO:0000255" key="1">
    <source>
        <dbReference type="HAMAP-Rule" id="MF_01342"/>
    </source>
</evidence>
<evidence type="ECO:0000256" key="2">
    <source>
        <dbReference type="SAM" id="MobiDB-lite"/>
    </source>
</evidence>
<evidence type="ECO:0000305" key="3"/>
<feature type="chain" id="PRO_0000062056" description="Large ribosomal subunit protein uL16">
    <location>
        <begin position="1"/>
        <end position="138"/>
    </location>
</feature>
<feature type="region of interest" description="Disordered" evidence="2">
    <location>
        <begin position="1"/>
        <end position="24"/>
    </location>
</feature>
<feature type="compositionally biased region" description="Basic residues" evidence="2">
    <location>
        <begin position="1"/>
        <end position="13"/>
    </location>
</feature>
<dbReference type="EMBL" id="BX640422">
    <property type="protein sequence ID" value="CAE43878.1"/>
    <property type="molecule type" value="Genomic_DNA"/>
</dbReference>
<dbReference type="RefSeq" id="NP_882130.1">
    <property type="nucleotide sequence ID" value="NC_002929.2"/>
</dbReference>
<dbReference type="RefSeq" id="WP_003806911.1">
    <property type="nucleotide sequence ID" value="NZ_CP039022.1"/>
</dbReference>
<dbReference type="SMR" id="Q7VTC6"/>
<dbReference type="STRING" id="257313.BP3620"/>
<dbReference type="PaxDb" id="257313-BP3620"/>
<dbReference type="GeneID" id="93206265"/>
<dbReference type="KEGG" id="bpe:BP3620"/>
<dbReference type="PATRIC" id="fig|257313.5.peg.3918"/>
<dbReference type="eggNOG" id="COG0197">
    <property type="taxonomic scope" value="Bacteria"/>
</dbReference>
<dbReference type="HOGENOM" id="CLU_078858_2_1_4"/>
<dbReference type="Proteomes" id="UP000002676">
    <property type="component" value="Chromosome"/>
</dbReference>
<dbReference type="GO" id="GO:0022625">
    <property type="term" value="C:cytosolic large ribosomal subunit"/>
    <property type="evidence" value="ECO:0007669"/>
    <property type="project" value="TreeGrafter"/>
</dbReference>
<dbReference type="GO" id="GO:0019843">
    <property type="term" value="F:rRNA binding"/>
    <property type="evidence" value="ECO:0007669"/>
    <property type="project" value="UniProtKB-UniRule"/>
</dbReference>
<dbReference type="GO" id="GO:0003735">
    <property type="term" value="F:structural constituent of ribosome"/>
    <property type="evidence" value="ECO:0007669"/>
    <property type="project" value="InterPro"/>
</dbReference>
<dbReference type="GO" id="GO:0000049">
    <property type="term" value="F:tRNA binding"/>
    <property type="evidence" value="ECO:0007669"/>
    <property type="project" value="UniProtKB-KW"/>
</dbReference>
<dbReference type="GO" id="GO:0006412">
    <property type="term" value="P:translation"/>
    <property type="evidence" value="ECO:0007669"/>
    <property type="project" value="UniProtKB-UniRule"/>
</dbReference>
<dbReference type="CDD" id="cd01433">
    <property type="entry name" value="Ribosomal_L16_L10e"/>
    <property type="match status" value="1"/>
</dbReference>
<dbReference type="FunFam" id="3.90.1170.10:FF:000001">
    <property type="entry name" value="50S ribosomal protein L16"/>
    <property type="match status" value="1"/>
</dbReference>
<dbReference type="Gene3D" id="3.90.1170.10">
    <property type="entry name" value="Ribosomal protein L10e/L16"/>
    <property type="match status" value="1"/>
</dbReference>
<dbReference type="HAMAP" id="MF_01342">
    <property type="entry name" value="Ribosomal_uL16"/>
    <property type="match status" value="1"/>
</dbReference>
<dbReference type="InterPro" id="IPR047873">
    <property type="entry name" value="Ribosomal_uL16"/>
</dbReference>
<dbReference type="InterPro" id="IPR000114">
    <property type="entry name" value="Ribosomal_uL16_bact-type"/>
</dbReference>
<dbReference type="InterPro" id="IPR020798">
    <property type="entry name" value="Ribosomal_uL16_CS"/>
</dbReference>
<dbReference type="InterPro" id="IPR016180">
    <property type="entry name" value="Ribosomal_uL16_dom"/>
</dbReference>
<dbReference type="InterPro" id="IPR036920">
    <property type="entry name" value="Ribosomal_uL16_sf"/>
</dbReference>
<dbReference type="NCBIfam" id="TIGR01164">
    <property type="entry name" value="rplP_bact"/>
    <property type="match status" value="1"/>
</dbReference>
<dbReference type="PANTHER" id="PTHR12220">
    <property type="entry name" value="50S/60S RIBOSOMAL PROTEIN L16"/>
    <property type="match status" value="1"/>
</dbReference>
<dbReference type="PANTHER" id="PTHR12220:SF13">
    <property type="entry name" value="LARGE RIBOSOMAL SUBUNIT PROTEIN UL16M"/>
    <property type="match status" value="1"/>
</dbReference>
<dbReference type="Pfam" id="PF00252">
    <property type="entry name" value="Ribosomal_L16"/>
    <property type="match status" value="1"/>
</dbReference>
<dbReference type="PRINTS" id="PR00060">
    <property type="entry name" value="RIBOSOMALL16"/>
</dbReference>
<dbReference type="SUPFAM" id="SSF54686">
    <property type="entry name" value="Ribosomal protein L16p/L10e"/>
    <property type="match status" value="1"/>
</dbReference>
<dbReference type="PROSITE" id="PS00586">
    <property type="entry name" value="RIBOSOMAL_L16_1"/>
    <property type="match status" value="1"/>
</dbReference>
<dbReference type="PROSITE" id="PS00701">
    <property type="entry name" value="RIBOSOMAL_L16_2"/>
    <property type="match status" value="1"/>
</dbReference>
<proteinExistence type="inferred from homology"/>
<gene>
    <name evidence="1" type="primary">rplP</name>
    <name type="ordered locus">BP3620</name>
</gene>
<sequence>MLQPSRRKYRKEQKGRNTGLASRGTHVSFGEFGLKATGRGRLTARQIEAARRAINRHIKRGGRIWIRIFPDKPISQKPAEVRMGNGKGNPEYWVAEIQPGKVLYEMEGVSEELAREAFRLAAAKLPISTTFVARHIGA</sequence>
<accession>Q7VTC6</accession>
<protein>
    <recommendedName>
        <fullName evidence="1">Large ribosomal subunit protein uL16</fullName>
    </recommendedName>
    <alternativeName>
        <fullName evidence="3">50S ribosomal protein L16</fullName>
    </alternativeName>
</protein>
<organism>
    <name type="scientific">Bordetella pertussis (strain Tohama I / ATCC BAA-589 / NCTC 13251)</name>
    <dbReference type="NCBI Taxonomy" id="257313"/>
    <lineage>
        <taxon>Bacteria</taxon>
        <taxon>Pseudomonadati</taxon>
        <taxon>Pseudomonadota</taxon>
        <taxon>Betaproteobacteria</taxon>
        <taxon>Burkholderiales</taxon>
        <taxon>Alcaligenaceae</taxon>
        <taxon>Bordetella</taxon>
    </lineage>
</organism>
<reference key="1">
    <citation type="journal article" date="2003" name="Nat. Genet.">
        <title>Comparative analysis of the genome sequences of Bordetella pertussis, Bordetella parapertussis and Bordetella bronchiseptica.</title>
        <authorList>
            <person name="Parkhill J."/>
            <person name="Sebaihia M."/>
            <person name="Preston A."/>
            <person name="Murphy L.D."/>
            <person name="Thomson N.R."/>
            <person name="Harris D.E."/>
            <person name="Holden M.T.G."/>
            <person name="Churcher C.M."/>
            <person name="Bentley S.D."/>
            <person name="Mungall K.L."/>
            <person name="Cerdeno-Tarraga A.-M."/>
            <person name="Temple L."/>
            <person name="James K.D."/>
            <person name="Harris B."/>
            <person name="Quail M.A."/>
            <person name="Achtman M."/>
            <person name="Atkin R."/>
            <person name="Baker S."/>
            <person name="Basham D."/>
            <person name="Bason N."/>
            <person name="Cherevach I."/>
            <person name="Chillingworth T."/>
            <person name="Collins M."/>
            <person name="Cronin A."/>
            <person name="Davis P."/>
            <person name="Doggett J."/>
            <person name="Feltwell T."/>
            <person name="Goble A."/>
            <person name="Hamlin N."/>
            <person name="Hauser H."/>
            <person name="Holroyd S."/>
            <person name="Jagels K."/>
            <person name="Leather S."/>
            <person name="Moule S."/>
            <person name="Norberczak H."/>
            <person name="O'Neil S."/>
            <person name="Ormond D."/>
            <person name="Price C."/>
            <person name="Rabbinowitsch E."/>
            <person name="Rutter S."/>
            <person name="Sanders M."/>
            <person name="Saunders D."/>
            <person name="Seeger K."/>
            <person name="Sharp S."/>
            <person name="Simmonds M."/>
            <person name="Skelton J."/>
            <person name="Squares R."/>
            <person name="Squares S."/>
            <person name="Stevens K."/>
            <person name="Unwin L."/>
            <person name="Whitehead S."/>
            <person name="Barrell B.G."/>
            <person name="Maskell D.J."/>
        </authorList>
    </citation>
    <scope>NUCLEOTIDE SEQUENCE [LARGE SCALE GENOMIC DNA]</scope>
    <source>
        <strain>Tohama I / ATCC BAA-589 / NCTC 13251</strain>
    </source>
</reference>
<keyword id="KW-1185">Reference proteome</keyword>
<keyword id="KW-0687">Ribonucleoprotein</keyword>
<keyword id="KW-0689">Ribosomal protein</keyword>
<keyword id="KW-0694">RNA-binding</keyword>
<keyword id="KW-0699">rRNA-binding</keyword>
<keyword id="KW-0820">tRNA-binding</keyword>
<name>RL16_BORPE</name>
<comment type="function">
    <text evidence="1">Binds 23S rRNA and is also seen to make contacts with the A and possibly P site tRNAs.</text>
</comment>
<comment type="subunit">
    <text evidence="1">Part of the 50S ribosomal subunit.</text>
</comment>
<comment type="similarity">
    <text evidence="1">Belongs to the universal ribosomal protein uL16 family.</text>
</comment>